<evidence type="ECO:0000255" key="1">
    <source>
        <dbReference type="HAMAP-Rule" id="MF_00049"/>
    </source>
</evidence>
<organism>
    <name type="scientific">Buchnera aphidicola subsp. Schizaphis graminum (strain Sg)</name>
    <dbReference type="NCBI Taxonomy" id="198804"/>
    <lineage>
        <taxon>Bacteria</taxon>
        <taxon>Pseudomonadati</taxon>
        <taxon>Pseudomonadota</taxon>
        <taxon>Gammaproteobacteria</taxon>
        <taxon>Enterobacterales</taxon>
        <taxon>Erwiniaceae</taxon>
        <taxon>Buchnera</taxon>
    </lineage>
</organism>
<accession>Q8K9B9</accession>
<protein>
    <recommendedName>
        <fullName evidence="1">Leucine--tRNA ligase</fullName>
        <ecNumber evidence="1">6.1.1.4</ecNumber>
    </recommendedName>
    <alternativeName>
        <fullName evidence="1">Leucyl-tRNA synthetase</fullName>
        <shortName evidence="1">LeuRS</shortName>
    </alternativeName>
</protein>
<reference key="1">
    <citation type="journal article" date="2002" name="Science">
        <title>50 million years of genomic stasis in endosymbiotic bacteria.</title>
        <authorList>
            <person name="Tamas I."/>
            <person name="Klasson L."/>
            <person name="Canbaeck B."/>
            <person name="Naeslund A.K."/>
            <person name="Eriksson A.-S."/>
            <person name="Wernegreen J.J."/>
            <person name="Sandstroem J.P."/>
            <person name="Moran N.A."/>
            <person name="Andersson S.G.E."/>
        </authorList>
    </citation>
    <scope>NUCLEOTIDE SEQUENCE [LARGE SCALE GENOMIC DNA]</scope>
    <source>
        <strain>Sg</strain>
    </source>
</reference>
<gene>
    <name evidence="1" type="primary">leuS</name>
    <name type="ordered locus">BUsg_429</name>
</gene>
<comment type="catalytic activity">
    <reaction evidence="1">
        <text>tRNA(Leu) + L-leucine + ATP = L-leucyl-tRNA(Leu) + AMP + diphosphate</text>
        <dbReference type="Rhea" id="RHEA:11688"/>
        <dbReference type="Rhea" id="RHEA-COMP:9613"/>
        <dbReference type="Rhea" id="RHEA-COMP:9622"/>
        <dbReference type="ChEBI" id="CHEBI:30616"/>
        <dbReference type="ChEBI" id="CHEBI:33019"/>
        <dbReference type="ChEBI" id="CHEBI:57427"/>
        <dbReference type="ChEBI" id="CHEBI:78442"/>
        <dbReference type="ChEBI" id="CHEBI:78494"/>
        <dbReference type="ChEBI" id="CHEBI:456215"/>
        <dbReference type="EC" id="6.1.1.4"/>
    </reaction>
</comment>
<comment type="subcellular location">
    <subcellularLocation>
        <location evidence="1">Cytoplasm</location>
    </subcellularLocation>
</comment>
<comment type="similarity">
    <text evidence="1">Belongs to the class-I aminoacyl-tRNA synthetase family.</text>
</comment>
<feature type="chain" id="PRO_0000151988" description="Leucine--tRNA ligase">
    <location>
        <begin position="1"/>
        <end position="861"/>
    </location>
</feature>
<feature type="short sequence motif" description="'HIGH' region">
    <location>
        <begin position="42"/>
        <end position="52"/>
    </location>
</feature>
<feature type="short sequence motif" description="'KMSKS' region">
    <location>
        <begin position="620"/>
        <end position="624"/>
    </location>
</feature>
<feature type="binding site" evidence="1">
    <location>
        <position position="623"/>
    </location>
    <ligand>
        <name>ATP</name>
        <dbReference type="ChEBI" id="CHEBI:30616"/>
    </ligand>
</feature>
<name>SYL_BUCAP</name>
<keyword id="KW-0030">Aminoacyl-tRNA synthetase</keyword>
<keyword id="KW-0067">ATP-binding</keyword>
<keyword id="KW-0963">Cytoplasm</keyword>
<keyword id="KW-0436">Ligase</keyword>
<keyword id="KW-0547">Nucleotide-binding</keyword>
<keyword id="KW-0648">Protein biosynthesis</keyword>
<proteinExistence type="inferred from homology"/>
<sequence>MEKEYCPKNIEPYVQQYWKDNKVFHVYEDDKKEKYYCLPMLPYPSGKLHMGHVRNYTISDVISRYQRMLGKNVLQPIGWDAFGLPAEEAAIKNKTKPSDWTQKNIKYMKKQLQSLGFSYDWSREITTCKPDYYCWEQWFFIQLYKKKLVYKKNSFVNWCPYDKTVLANEQVIKGCCWRCQNKIKVKKIPQWFIKIRNYAESLHNDLNDLENWPEKVKNMQRNWIGRSKGFEIVFNVLNSNKKIKAFTNRLDLIMGATYISISPCHEFSVHVSKEKKEIQKFIDQKINNSASQEDIEKIKFEGINSNMFVIHPITNKKIPVWISNFIQKEYGTNAIISVPGHNQNDWNFSIKHNLKIKYVIKNKKYKNTQLHNLFTTEKGILYNSGEFNNLNYHNATEKIKKTLLKKKIIKEKINYKLQDWCISRQRYWGTPIPMATKKNGEIIAIPEKNLPVLLPEIKNYSDSLQKPMDSSSKWANIKIENQDVIRETDTFDTFMESSWYYARYTCPNFNTGMIDPTASKYWLPVDQYIGGIEHATMHLIYFRFYHKLLRDFKLVELNEPVKNLICQGMVLSEAFYQFDKNNQRNWIHPSCVQVEKNLKGETIKVDIKNKKKVIYAGMIKMSKSKNNGIEPELMINRYGADTLRLFIMFAAPIESSLEWRESGVKGIYRFLKKIWKLVFNHIEVKKINKKVNFDILNKKQKKMYCLLHKTIIKVSDDIGRRKSFNTAISSIMELVNELSIFKIENEEDKSIIKESLMSIIKMLYPFTPHFCFRLWQYLNKNCCIDYETWPTFEKKILSSDKNTLIIQINGKKQCAIEVKNHLNKEEILSYIENQSIIQKKIKNLKIIKIIYIPQKVINFVV</sequence>
<dbReference type="EC" id="6.1.1.4" evidence="1"/>
<dbReference type="EMBL" id="AE013218">
    <property type="protein sequence ID" value="AAM67972.1"/>
    <property type="molecule type" value="Genomic_DNA"/>
</dbReference>
<dbReference type="RefSeq" id="WP_011053939.1">
    <property type="nucleotide sequence ID" value="NC_004061.1"/>
</dbReference>
<dbReference type="SMR" id="Q8K9B9"/>
<dbReference type="STRING" id="198804.BUsg_429"/>
<dbReference type="GeneID" id="93003901"/>
<dbReference type="KEGG" id="bas:BUsg_429"/>
<dbReference type="eggNOG" id="COG0495">
    <property type="taxonomic scope" value="Bacteria"/>
</dbReference>
<dbReference type="HOGENOM" id="CLU_004427_0_0_6"/>
<dbReference type="Proteomes" id="UP000000416">
    <property type="component" value="Chromosome"/>
</dbReference>
<dbReference type="GO" id="GO:0005829">
    <property type="term" value="C:cytosol"/>
    <property type="evidence" value="ECO:0007669"/>
    <property type="project" value="TreeGrafter"/>
</dbReference>
<dbReference type="GO" id="GO:0002161">
    <property type="term" value="F:aminoacyl-tRNA deacylase activity"/>
    <property type="evidence" value="ECO:0007669"/>
    <property type="project" value="InterPro"/>
</dbReference>
<dbReference type="GO" id="GO:0005524">
    <property type="term" value="F:ATP binding"/>
    <property type="evidence" value="ECO:0007669"/>
    <property type="project" value="UniProtKB-UniRule"/>
</dbReference>
<dbReference type="GO" id="GO:0004823">
    <property type="term" value="F:leucine-tRNA ligase activity"/>
    <property type="evidence" value="ECO:0007669"/>
    <property type="project" value="UniProtKB-UniRule"/>
</dbReference>
<dbReference type="GO" id="GO:0006429">
    <property type="term" value="P:leucyl-tRNA aminoacylation"/>
    <property type="evidence" value="ECO:0007669"/>
    <property type="project" value="UniProtKB-UniRule"/>
</dbReference>
<dbReference type="CDD" id="cd07958">
    <property type="entry name" value="Anticodon_Ia_Leu_BEm"/>
    <property type="match status" value="1"/>
</dbReference>
<dbReference type="CDD" id="cd00812">
    <property type="entry name" value="LeuRS_core"/>
    <property type="match status" value="1"/>
</dbReference>
<dbReference type="FunFam" id="1.10.730.10:FF:000003">
    <property type="entry name" value="Leucine--tRNA ligase"/>
    <property type="match status" value="1"/>
</dbReference>
<dbReference type="FunFam" id="2.20.28.290:FF:000001">
    <property type="entry name" value="Leucine--tRNA ligase"/>
    <property type="match status" value="1"/>
</dbReference>
<dbReference type="FunFam" id="3.40.50.620:FF:000003">
    <property type="entry name" value="Leucine--tRNA ligase"/>
    <property type="match status" value="1"/>
</dbReference>
<dbReference type="Gene3D" id="2.20.28.290">
    <property type="match status" value="1"/>
</dbReference>
<dbReference type="Gene3D" id="3.10.20.590">
    <property type="match status" value="1"/>
</dbReference>
<dbReference type="Gene3D" id="3.40.50.620">
    <property type="entry name" value="HUPs"/>
    <property type="match status" value="2"/>
</dbReference>
<dbReference type="Gene3D" id="1.10.730.10">
    <property type="entry name" value="Isoleucyl-tRNA Synthetase, Domain 1"/>
    <property type="match status" value="1"/>
</dbReference>
<dbReference type="HAMAP" id="MF_00049_B">
    <property type="entry name" value="Leu_tRNA_synth_B"/>
    <property type="match status" value="1"/>
</dbReference>
<dbReference type="InterPro" id="IPR001412">
    <property type="entry name" value="aa-tRNA-synth_I_CS"/>
</dbReference>
<dbReference type="InterPro" id="IPR002300">
    <property type="entry name" value="aa-tRNA-synth_Ia"/>
</dbReference>
<dbReference type="InterPro" id="IPR002302">
    <property type="entry name" value="Leu-tRNA-ligase"/>
</dbReference>
<dbReference type="InterPro" id="IPR025709">
    <property type="entry name" value="Leu_tRNA-synth_edit"/>
</dbReference>
<dbReference type="InterPro" id="IPR013155">
    <property type="entry name" value="M/V/L/I-tRNA-synth_anticd-bd"/>
</dbReference>
<dbReference type="InterPro" id="IPR015413">
    <property type="entry name" value="Methionyl/Leucyl_tRNA_Synth"/>
</dbReference>
<dbReference type="InterPro" id="IPR014729">
    <property type="entry name" value="Rossmann-like_a/b/a_fold"/>
</dbReference>
<dbReference type="InterPro" id="IPR009080">
    <property type="entry name" value="tRNAsynth_Ia_anticodon-bd"/>
</dbReference>
<dbReference type="InterPro" id="IPR009008">
    <property type="entry name" value="Val/Leu/Ile-tRNA-synth_edit"/>
</dbReference>
<dbReference type="NCBIfam" id="TIGR00396">
    <property type="entry name" value="leuS_bact"/>
    <property type="match status" value="1"/>
</dbReference>
<dbReference type="PANTHER" id="PTHR43740:SF2">
    <property type="entry name" value="LEUCINE--TRNA LIGASE, MITOCHONDRIAL"/>
    <property type="match status" value="1"/>
</dbReference>
<dbReference type="PANTHER" id="PTHR43740">
    <property type="entry name" value="LEUCYL-TRNA SYNTHETASE"/>
    <property type="match status" value="1"/>
</dbReference>
<dbReference type="Pfam" id="PF08264">
    <property type="entry name" value="Anticodon_1"/>
    <property type="match status" value="1"/>
</dbReference>
<dbReference type="Pfam" id="PF00133">
    <property type="entry name" value="tRNA-synt_1"/>
    <property type="match status" value="2"/>
</dbReference>
<dbReference type="Pfam" id="PF13603">
    <property type="entry name" value="tRNA-synt_1_2"/>
    <property type="match status" value="1"/>
</dbReference>
<dbReference type="Pfam" id="PF09334">
    <property type="entry name" value="tRNA-synt_1g"/>
    <property type="match status" value="1"/>
</dbReference>
<dbReference type="PRINTS" id="PR00985">
    <property type="entry name" value="TRNASYNTHLEU"/>
</dbReference>
<dbReference type="SUPFAM" id="SSF47323">
    <property type="entry name" value="Anticodon-binding domain of a subclass of class I aminoacyl-tRNA synthetases"/>
    <property type="match status" value="1"/>
</dbReference>
<dbReference type="SUPFAM" id="SSF52374">
    <property type="entry name" value="Nucleotidylyl transferase"/>
    <property type="match status" value="1"/>
</dbReference>
<dbReference type="SUPFAM" id="SSF50677">
    <property type="entry name" value="ValRS/IleRS/LeuRS editing domain"/>
    <property type="match status" value="1"/>
</dbReference>
<dbReference type="PROSITE" id="PS00178">
    <property type="entry name" value="AA_TRNA_LIGASE_I"/>
    <property type="match status" value="1"/>
</dbReference>